<protein>
    <recommendedName>
        <fullName>Integrin alpha-2</fullName>
    </recommendedName>
    <alternativeName>
        <fullName>CD49 antigen-like family member B</fullName>
    </alternativeName>
    <alternativeName>
        <fullName>Collagen receptor</fullName>
    </alternativeName>
    <alternativeName>
        <fullName>Platelet membrane glycoprotein Ia</fullName>
        <shortName>GPIa</shortName>
    </alternativeName>
    <alternativeName>
        <fullName>VLA-2 subunit alpha</fullName>
    </alternativeName>
    <cdAntigenName>CD49b</cdAntigenName>
</protein>
<dbReference type="EMBL" id="X17033">
    <property type="protein sequence ID" value="CAA34894.1"/>
    <property type="molecule type" value="mRNA"/>
</dbReference>
<dbReference type="EMBL" id="AF512556">
    <property type="protein sequence ID" value="AAM34795.1"/>
    <property type="molecule type" value="Genomic_DNA"/>
</dbReference>
<dbReference type="EMBL" id="L24121">
    <property type="protein sequence ID" value="AAA16619.2"/>
    <property type="molecule type" value="Genomic_DNA"/>
</dbReference>
<dbReference type="CCDS" id="CCDS3957.1"/>
<dbReference type="PIR" id="A33998">
    <property type="entry name" value="A33998"/>
</dbReference>
<dbReference type="RefSeq" id="NP_002194.2">
    <property type="nucleotide sequence ID" value="NM_002203.4"/>
</dbReference>
<dbReference type="PDB" id="1AOX">
    <property type="method" value="X-ray"/>
    <property type="resolution" value="2.10 A"/>
    <property type="chains" value="A/B=169-367"/>
</dbReference>
<dbReference type="PDB" id="1DZI">
    <property type="method" value="X-ray"/>
    <property type="resolution" value="2.10 A"/>
    <property type="chains" value="A=172-355"/>
</dbReference>
<dbReference type="PDB" id="1V7P">
    <property type="method" value="X-ray"/>
    <property type="resolution" value="1.90 A"/>
    <property type="chains" value="C=167-366"/>
</dbReference>
<dbReference type="PDB" id="4BJ3">
    <property type="method" value="X-ray"/>
    <property type="resolution" value="3.04 A"/>
    <property type="chains" value="A/B=171-368"/>
</dbReference>
<dbReference type="PDB" id="5HJ2">
    <property type="method" value="X-ray"/>
    <property type="resolution" value="2.15 A"/>
    <property type="chains" value="A/B/C/D/E/F=170-366"/>
</dbReference>
<dbReference type="PDB" id="5THP">
    <property type="method" value="X-ray"/>
    <property type="resolution" value="3.01 A"/>
    <property type="chains" value="C/F/I/L/O/R=170-366"/>
</dbReference>
<dbReference type="PDB" id="6ND8">
    <property type="method" value="X-ray"/>
    <property type="resolution" value="2.90 A"/>
    <property type="chains" value="C/F/I/L/O/R=170-366"/>
</dbReference>
<dbReference type="PDB" id="6ND9">
    <property type="method" value="X-ray"/>
    <property type="resolution" value="2.90 A"/>
    <property type="chains" value="C/F/I/L/O/R=170-366"/>
</dbReference>
<dbReference type="PDB" id="6NDA">
    <property type="method" value="X-ray"/>
    <property type="resolution" value="3.15 A"/>
    <property type="chains" value="C/F/I/L/O/R=170-366"/>
</dbReference>
<dbReference type="PDB" id="6NDB">
    <property type="method" value="X-ray"/>
    <property type="resolution" value="3.20 A"/>
    <property type="chains" value="C/F/I/L/O/R=170-366"/>
</dbReference>
<dbReference type="PDB" id="6NDC">
    <property type="method" value="X-ray"/>
    <property type="resolution" value="3.35 A"/>
    <property type="chains" value="C/F/I/L/O/R=170-366"/>
</dbReference>
<dbReference type="PDB" id="6NDD">
    <property type="method" value="X-ray"/>
    <property type="resolution" value="3.05 A"/>
    <property type="chains" value="C/F/I/L/O/R=170-366"/>
</dbReference>
<dbReference type="PDB" id="6NDE">
    <property type="method" value="X-ray"/>
    <property type="resolution" value="3.50 A"/>
    <property type="chains" value="C/F/I/L/O/R=170-366"/>
</dbReference>
<dbReference type="PDB" id="6NDF">
    <property type="method" value="X-ray"/>
    <property type="resolution" value="3.05 A"/>
    <property type="chains" value="C/F/I/L/O/R=170-366"/>
</dbReference>
<dbReference type="PDB" id="6NDG">
    <property type="method" value="X-ray"/>
    <property type="resolution" value="3.15 A"/>
    <property type="chains" value="C/F/I/L/O/R=170-366"/>
</dbReference>
<dbReference type="PDB" id="6NDH">
    <property type="method" value="X-ray"/>
    <property type="resolution" value="2.90 A"/>
    <property type="chains" value="C/F/I/L/O/R=170-366"/>
</dbReference>
<dbReference type="PDBsum" id="1AOX"/>
<dbReference type="PDBsum" id="1DZI"/>
<dbReference type="PDBsum" id="1V7P"/>
<dbReference type="PDBsum" id="4BJ3"/>
<dbReference type="PDBsum" id="5HJ2"/>
<dbReference type="PDBsum" id="5THP"/>
<dbReference type="PDBsum" id="6ND8"/>
<dbReference type="PDBsum" id="6ND9"/>
<dbReference type="PDBsum" id="6NDA"/>
<dbReference type="PDBsum" id="6NDB"/>
<dbReference type="PDBsum" id="6NDC"/>
<dbReference type="PDBsum" id="6NDD"/>
<dbReference type="PDBsum" id="6NDE"/>
<dbReference type="PDBsum" id="6NDF"/>
<dbReference type="PDBsum" id="6NDG"/>
<dbReference type="PDBsum" id="6NDH"/>
<dbReference type="BMRB" id="P17301"/>
<dbReference type="SMR" id="P17301"/>
<dbReference type="BioGRID" id="109880">
    <property type="interactions" value="137"/>
</dbReference>
<dbReference type="ComplexPortal" id="CPX-1801">
    <property type="entry name" value="Integrin alpha2-beta1 complex"/>
</dbReference>
<dbReference type="CORUM" id="P17301"/>
<dbReference type="DIP" id="DIP-67N"/>
<dbReference type="FunCoup" id="P17301">
    <property type="interactions" value="1341"/>
</dbReference>
<dbReference type="IntAct" id="P17301">
    <property type="interactions" value="66"/>
</dbReference>
<dbReference type="MINT" id="P17301"/>
<dbReference type="STRING" id="9606.ENSP00000296585"/>
<dbReference type="BindingDB" id="P17301"/>
<dbReference type="ChEMBL" id="CHEMBL4998"/>
<dbReference type="DrugBank" id="DB12505">
    <property type="generic name" value="E-7820"/>
</dbReference>
<dbReference type="GuidetoPHARMACOLOGY" id="2440"/>
<dbReference type="GlyConnect" id="1406">
    <property type="glycosylation" value="29 N-Linked glycans (6 sites)"/>
</dbReference>
<dbReference type="GlyCosmos" id="P17301">
    <property type="glycosylation" value="10 sites, 33 glycans"/>
</dbReference>
<dbReference type="GlyGen" id="P17301">
    <property type="glycosylation" value="12 sites, 75 N-linked glycans (9 sites), 1 O-linked glycan (1 site)"/>
</dbReference>
<dbReference type="iPTMnet" id="P17301"/>
<dbReference type="PhosphoSitePlus" id="P17301"/>
<dbReference type="SwissPalm" id="P17301"/>
<dbReference type="BioMuta" id="ITGA2"/>
<dbReference type="DMDM" id="124942"/>
<dbReference type="jPOST" id="P17301"/>
<dbReference type="MassIVE" id="P17301"/>
<dbReference type="PaxDb" id="9606-ENSP00000296585"/>
<dbReference type="PeptideAtlas" id="P17301"/>
<dbReference type="ProteomicsDB" id="53466"/>
<dbReference type="Pumba" id="P17301"/>
<dbReference type="ABCD" id="P17301">
    <property type="antibodies" value="8 sequenced antibodies"/>
</dbReference>
<dbReference type="Antibodypedia" id="10993">
    <property type="antibodies" value="1467 antibodies from 47 providers"/>
</dbReference>
<dbReference type="DNASU" id="3673"/>
<dbReference type="Ensembl" id="ENST00000296585.10">
    <property type="protein sequence ID" value="ENSP00000296585.5"/>
    <property type="gene ID" value="ENSG00000164171.11"/>
</dbReference>
<dbReference type="GeneID" id="3673"/>
<dbReference type="KEGG" id="hsa:3673"/>
<dbReference type="MANE-Select" id="ENST00000296585.10">
    <property type="protein sequence ID" value="ENSP00000296585.5"/>
    <property type="RefSeq nucleotide sequence ID" value="NM_002203.4"/>
    <property type="RefSeq protein sequence ID" value="NP_002194.2"/>
</dbReference>
<dbReference type="UCSC" id="uc003joy.3">
    <property type="organism name" value="human"/>
</dbReference>
<dbReference type="AGR" id="HGNC:6137"/>
<dbReference type="CTD" id="3673"/>
<dbReference type="DisGeNET" id="3673"/>
<dbReference type="GeneCards" id="ITGA2"/>
<dbReference type="HGNC" id="HGNC:6137">
    <property type="gene designation" value="ITGA2"/>
</dbReference>
<dbReference type="HPA" id="ENSG00000164171">
    <property type="expression patterns" value="Low tissue specificity"/>
</dbReference>
<dbReference type="MalaCards" id="ITGA2"/>
<dbReference type="MIM" id="192974">
    <property type="type" value="gene+phenotype"/>
</dbReference>
<dbReference type="neXtProt" id="NX_P17301"/>
<dbReference type="OpenTargets" id="ENSG00000164171"/>
<dbReference type="Orphanet" id="853">
    <property type="disease" value="Fetal and neonatal alloimmune thrombocytopenia"/>
</dbReference>
<dbReference type="PharmGKB" id="PA204"/>
<dbReference type="VEuPathDB" id="HostDB:ENSG00000164171"/>
<dbReference type="eggNOG" id="KOG3637">
    <property type="taxonomic scope" value="Eukaryota"/>
</dbReference>
<dbReference type="GeneTree" id="ENSGT00940000156303"/>
<dbReference type="InParanoid" id="P17301"/>
<dbReference type="OMA" id="IQYASQW"/>
<dbReference type="OrthoDB" id="5317514at2759"/>
<dbReference type="PAN-GO" id="P17301">
    <property type="GO annotations" value="7 GO annotations based on evolutionary models"/>
</dbReference>
<dbReference type="PhylomeDB" id="P17301"/>
<dbReference type="TreeFam" id="TF105391"/>
<dbReference type="PathwayCommons" id="P17301"/>
<dbReference type="Reactome" id="R-HSA-216083">
    <property type="pathway name" value="Integrin cell surface interactions"/>
</dbReference>
<dbReference type="Reactome" id="R-HSA-3000157">
    <property type="pathway name" value="Laminin interactions"/>
</dbReference>
<dbReference type="Reactome" id="R-HSA-3000170">
    <property type="pathway name" value="Syndecan interactions"/>
</dbReference>
<dbReference type="Reactome" id="R-HSA-3000178">
    <property type="pathway name" value="ECM proteoglycans"/>
</dbReference>
<dbReference type="Reactome" id="R-HSA-447041">
    <property type="pathway name" value="CHL1 interactions"/>
</dbReference>
<dbReference type="Reactome" id="R-HSA-75892">
    <property type="pathway name" value="Platelet Adhesion to exposed collagen"/>
</dbReference>
<dbReference type="Reactome" id="R-HSA-8874081">
    <property type="pathway name" value="MET activates PTK2 signaling"/>
</dbReference>
<dbReference type="Reactome" id="R-HSA-9926550">
    <property type="pathway name" value="Regulation of MITF-M-dependent genes involved in extracellular matrix, focal adhesion and epithelial-to-mesenchymal transition"/>
</dbReference>
<dbReference type="SignaLink" id="P17301"/>
<dbReference type="SIGNOR" id="P17301"/>
<dbReference type="BioGRID-ORCS" id="3673">
    <property type="hits" value="5 hits in 1152 CRISPR screens"/>
</dbReference>
<dbReference type="ChiTaRS" id="ITGA2">
    <property type="organism name" value="human"/>
</dbReference>
<dbReference type="EvolutionaryTrace" id="P17301"/>
<dbReference type="GeneWiki" id="CD49b"/>
<dbReference type="GenomeRNAi" id="3673"/>
<dbReference type="Pharos" id="P17301">
    <property type="development level" value="Tbio"/>
</dbReference>
<dbReference type="PRO" id="PR:P17301"/>
<dbReference type="Proteomes" id="UP000005640">
    <property type="component" value="Chromosome 5"/>
</dbReference>
<dbReference type="RNAct" id="P17301">
    <property type="molecule type" value="protein"/>
</dbReference>
<dbReference type="Bgee" id="ENSG00000164171">
    <property type="expression patterns" value="Expressed in ventricular zone and 159 other cell types or tissues"/>
</dbReference>
<dbReference type="ExpressionAtlas" id="P17301">
    <property type="expression patterns" value="baseline and differential"/>
</dbReference>
<dbReference type="GO" id="GO:0043679">
    <property type="term" value="C:axon terminus"/>
    <property type="evidence" value="ECO:0007669"/>
    <property type="project" value="Ensembl"/>
</dbReference>
<dbReference type="GO" id="GO:0045178">
    <property type="term" value="C:basal part of cell"/>
    <property type="evidence" value="ECO:0007669"/>
    <property type="project" value="Ensembl"/>
</dbReference>
<dbReference type="GO" id="GO:0009986">
    <property type="term" value="C:cell surface"/>
    <property type="evidence" value="ECO:0000314"/>
    <property type="project" value="UniProtKB"/>
</dbReference>
<dbReference type="GO" id="GO:0009897">
    <property type="term" value="C:external side of plasma membrane"/>
    <property type="evidence" value="ECO:0000318"/>
    <property type="project" value="GO_Central"/>
</dbReference>
<dbReference type="GO" id="GO:0005925">
    <property type="term" value="C:focal adhesion"/>
    <property type="evidence" value="ECO:0000314"/>
    <property type="project" value="UniProtKB"/>
</dbReference>
<dbReference type="GO" id="GO:0034666">
    <property type="term" value="C:integrin alpha2-beta1 complex"/>
    <property type="evidence" value="ECO:0000314"/>
    <property type="project" value="UniProtKB"/>
</dbReference>
<dbReference type="GO" id="GO:0008305">
    <property type="term" value="C:integrin complex"/>
    <property type="evidence" value="ECO:0000318"/>
    <property type="project" value="GO_Central"/>
</dbReference>
<dbReference type="GO" id="GO:0048471">
    <property type="term" value="C:perinuclear region of cytoplasm"/>
    <property type="evidence" value="ECO:0007669"/>
    <property type="project" value="Ensembl"/>
</dbReference>
<dbReference type="GO" id="GO:0005886">
    <property type="term" value="C:plasma membrane"/>
    <property type="evidence" value="ECO:0000314"/>
    <property type="project" value="BHF-UCL"/>
</dbReference>
<dbReference type="GO" id="GO:0001540">
    <property type="term" value="F:amyloid-beta binding"/>
    <property type="evidence" value="ECO:0000250"/>
    <property type="project" value="ARUK-UCL"/>
</dbReference>
<dbReference type="GO" id="GO:0005518">
    <property type="term" value="F:collagen binding"/>
    <property type="evidence" value="ECO:0000315"/>
    <property type="project" value="UniProtKB"/>
</dbReference>
<dbReference type="GO" id="GO:0098639">
    <property type="term" value="F:collagen binding involved in cell-matrix adhesion"/>
    <property type="evidence" value="ECO:0000315"/>
    <property type="project" value="UniProtKB"/>
</dbReference>
<dbReference type="GO" id="GO:0038064">
    <property type="term" value="F:collagen receptor activity"/>
    <property type="evidence" value="ECO:0000315"/>
    <property type="project" value="UniProtKB"/>
</dbReference>
<dbReference type="GO" id="GO:0043395">
    <property type="term" value="F:heparan sulfate proteoglycan binding"/>
    <property type="evidence" value="ECO:0000304"/>
    <property type="project" value="ARUK-UCL"/>
</dbReference>
<dbReference type="GO" id="GO:0005178">
    <property type="term" value="F:integrin binding"/>
    <property type="evidence" value="ECO:0000318"/>
    <property type="project" value="GO_Central"/>
</dbReference>
<dbReference type="GO" id="GO:0043236">
    <property type="term" value="F:laminin binding"/>
    <property type="evidence" value="ECO:0007669"/>
    <property type="project" value="Ensembl"/>
</dbReference>
<dbReference type="GO" id="GO:0046872">
    <property type="term" value="F:metal ion binding"/>
    <property type="evidence" value="ECO:0007669"/>
    <property type="project" value="UniProtKB-KW"/>
</dbReference>
<dbReference type="GO" id="GO:0044877">
    <property type="term" value="F:protein-containing complex binding"/>
    <property type="evidence" value="ECO:0000353"/>
    <property type="project" value="UniProtKB"/>
</dbReference>
<dbReference type="GO" id="GO:0001618">
    <property type="term" value="F:virus receptor activity"/>
    <property type="evidence" value="ECO:0007669"/>
    <property type="project" value="UniProtKB-KW"/>
</dbReference>
<dbReference type="GO" id="GO:0009887">
    <property type="term" value="P:animal organ morphogenesis"/>
    <property type="evidence" value="ECO:0000304"/>
    <property type="project" value="ProtInc"/>
</dbReference>
<dbReference type="GO" id="GO:0007596">
    <property type="term" value="P:blood coagulation"/>
    <property type="evidence" value="ECO:0000304"/>
    <property type="project" value="ProtInc"/>
</dbReference>
<dbReference type="GO" id="GO:0007155">
    <property type="term" value="P:cell adhesion"/>
    <property type="evidence" value="ECO:0000304"/>
    <property type="project" value="ProtInc"/>
</dbReference>
<dbReference type="GO" id="GO:0033627">
    <property type="term" value="P:cell adhesion mediated by integrin"/>
    <property type="evidence" value="ECO:0000315"/>
    <property type="project" value="UniProtKB"/>
</dbReference>
<dbReference type="GO" id="GO:0098609">
    <property type="term" value="P:cell-cell adhesion"/>
    <property type="evidence" value="ECO:0000318"/>
    <property type="project" value="GO_Central"/>
</dbReference>
<dbReference type="GO" id="GO:0007160">
    <property type="term" value="P:cell-matrix adhesion"/>
    <property type="evidence" value="ECO:0000315"/>
    <property type="project" value="UniProtKB"/>
</dbReference>
<dbReference type="GO" id="GO:0031589">
    <property type="term" value="P:cell-substrate adhesion"/>
    <property type="evidence" value="ECO:0000315"/>
    <property type="project" value="UniProtKB"/>
</dbReference>
<dbReference type="GO" id="GO:0071392">
    <property type="term" value="P:cellular response to estradiol stimulus"/>
    <property type="evidence" value="ECO:0007669"/>
    <property type="project" value="Ensembl"/>
</dbReference>
<dbReference type="GO" id="GO:0071260">
    <property type="term" value="P:cellular response to mechanical stimulus"/>
    <property type="evidence" value="ECO:0007669"/>
    <property type="project" value="Ensembl"/>
</dbReference>
<dbReference type="GO" id="GO:0038065">
    <property type="term" value="P:collagen-activated signaling pathway"/>
    <property type="evidence" value="ECO:0000315"/>
    <property type="project" value="UniProtKB"/>
</dbReference>
<dbReference type="GO" id="GO:0050966">
    <property type="term" value="P:detection of mechanical stimulus involved in sensory perception of pain"/>
    <property type="evidence" value="ECO:0007669"/>
    <property type="project" value="Ensembl"/>
</dbReference>
<dbReference type="GO" id="GO:0030198">
    <property type="term" value="P:extracellular matrix organization"/>
    <property type="evidence" value="ECO:0000303"/>
    <property type="project" value="ComplexPortal"/>
</dbReference>
<dbReference type="GO" id="GO:0007565">
    <property type="term" value="P:female pregnancy"/>
    <property type="evidence" value="ECO:0007669"/>
    <property type="project" value="Ensembl"/>
</dbReference>
<dbReference type="GO" id="GO:0048041">
    <property type="term" value="P:focal adhesion assembly"/>
    <property type="evidence" value="ECO:0007669"/>
    <property type="project" value="Ensembl"/>
</dbReference>
<dbReference type="GO" id="GO:0070365">
    <property type="term" value="P:hepatocyte differentiation"/>
    <property type="evidence" value="ECO:0007669"/>
    <property type="project" value="Ensembl"/>
</dbReference>
<dbReference type="GO" id="GO:0006971">
    <property type="term" value="P:hypotonic response"/>
    <property type="evidence" value="ECO:0007669"/>
    <property type="project" value="Ensembl"/>
</dbReference>
<dbReference type="GO" id="GO:0007229">
    <property type="term" value="P:integrin-mediated signaling pathway"/>
    <property type="evidence" value="ECO:0000315"/>
    <property type="project" value="UniProtKB"/>
</dbReference>
<dbReference type="GO" id="GO:0030879">
    <property type="term" value="P:mammary gland development"/>
    <property type="evidence" value="ECO:0007669"/>
    <property type="project" value="Ensembl"/>
</dbReference>
<dbReference type="GO" id="GO:0048333">
    <property type="term" value="P:mesodermal cell differentiation"/>
    <property type="evidence" value="ECO:0000270"/>
    <property type="project" value="UniProtKB"/>
</dbReference>
<dbReference type="GO" id="GO:0045785">
    <property type="term" value="P:positive regulation of cell adhesion"/>
    <property type="evidence" value="ECO:0007669"/>
    <property type="project" value="Ensembl"/>
</dbReference>
<dbReference type="GO" id="GO:0031346">
    <property type="term" value="P:positive regulation of cell projection organization"/>
    <property type="evidence" value="ECO:0007669"/>
    <property type="project" value="Ensembl"/>
</dbReference>
<dbReference type="GO" id="GO:0032967">
    <property type="term" value="P:positive regulation of collagen biosynthetic process"/>
    <property type="evidence" value="ECO:0007669"/>
    <property type="project" value="Ensembl"/>
</dbReference>
<dbReference type="GO" id="GO:0010634">
    <property type="term" value="P:positive regulation of epithelial cell migration"/>
    <property type="evidence" value="ECO:0007669"/>
    <property type="project" value="Ensembl"/>
</dbReference>
<dbReference type="GO" id="GO:0002687">
    <property type="term" value="P:positive regulation of leukocyte migration"/>
    <property type="evidence" value="ECO:0007669"/>
    <property type="project" value="Ensembl"/>
</dbReference>
<dbReference type="GO" id="GO:0060100">
    <property type="term" value="P:positive regulation of phagocytosis, engulfment"/>
    <property type="evidence" value="ECO:0007669"/>
    <property type="project" value="Ensembl"/>
</dbReference>
<dbReference type="GO" id="GO:0050927">
    <property type="term" value="P:positive regulation of positive chemotaxis"/>
    <property type="evidence" value="ECO:0007669"/>
    <property type="project" value="Ensembl"/>
</dbReference>
<dbReference type="GO" id="GO:0014911">
    <property type="term" value="P:positive regulation of smooth muscle cell migration"/>
    <property type="evidence" value="ECO:0007669"/>
    <property type="project" value="Ensembl"/>
</dbReference>
<dbReference type="GO" id="GO:0048661">
    <property type="term" value="P:positive regulation of smooth muscle cell proliferation"/>
    <property type="evidence" value="ECO:0007669"/>
    <property type="project" value="Ensembl"/>
</dbReference>
<dbReference type="GO" id="GO:0045987">
    <property type="term" value="P:positive regulation of smooth muscle contraction"/>
    <property type="evidence" value="ECO:0007669"/>
    <property type="project" value="Ensembl"/>
</dbReference>
<dbReference type="GO" id="GO:0045727">
    <property type="term" value="P:positive regulation of translation"/>
    <property type="evidence" value="ECO:0007669"/>
    <property type="project" value="Ensembl"/>
</dbReference>
<dbReference type="GO" id="GO:0051971">
    <property type="term" value="P:positive regulation of transmission of nerve impulse"/>
    <property type="evidence" value="ECO:0007669"/>
    <property type="project" value="Ensembl"/>
</dbReference>
<dbReference type="GO" id="GO:0014075">
    <property type="term" value="P:response to amine"/>
    <property type="evidence" value="ECO:0007669"/>
    <property type="project" value="Ensembl"/>
</dbReference>
<dbReference type="GO" id="GO:0001666">
    <property type="term" value="P:response to hypoxia"/>
    <property type="evidence" value="ECO:0007669"/>
    <property type="project" value="Ensembl"/>
</dbReference>
<dbReference type="GO" id="GO:0033591">
    <property type="term" value="P:response to L-ascorbic acid"/>
    <property type="evidence" value="ECO:0007669"/>
    <property type="project" value="Ensembl"/>
</dbReference>
<dbReference type="GO" id="GO:0014850">
    <property type="term" value="P:response to muscle activity"/>
    <property type="evidence" value="ECO:0007669"/>
    <property type="project" value="Ensembl"/>
</dbReference>
<dbReference type="GO" id="GO:0071107">
    <property type="term" value="P:response to parathyroid hormone"/>
    <property type="evidence" value="ECO:0007669"/>
    <property type="project" value="Ensembl"/>
</dbReference>
<dbReference type="GO" id="GO:0009410">
    <property type="term" value="P:response to xenobiotic stimulus"/>
    <property type="evidence" value="ECO:0007669"/>
    <property type="project" value="Ensembl"/>
</dbReference>
<dbReference type="GO" id="GO:0043589">
    <property type="term" value="P:skin morphogenesis"/>
    <property type="evidence" value="ECO:0007669"/>
    <property type="project" value="Ensembl"/>
</dbReference>
<dbReference type="GO" id="GO:0006929">
    <property type="term" value="P:substrate-dependent cell migration"/>
    <property type="evidence" value="ECO:0000315"/>
    <property type="project" value="UniProtKB"/>
</dbReference>
<dbReference type="CDD" id="cd01469">
    <property type="entry name" value="vWA_integrins_alpha_subunit"/>
    <property type="match status" value="1"/>
</dbReference>
<dbReference type="FunFam" id="1.20.5.930:FF:000008">
    <property type="entry name" value="Integrin subunit alpha 2"/>
    <property type="match status" value="1"/>
</dbReference>
<dbReference type="FunFam" id="2.130.10.130:FF:000008">
    <property type="entry name" value="Integrin subunit alpha 2"/>
    <property type="match status" value="1"/>
</dbReference>
<dbReference type="FunFam" id="2.60.40.1460:FF:000005">
    <property type="entry name" value="Integrin subunit alpha 2"/>
    <property type="match status" value="1"/>
</dbReference>
<dbReference type="FunFam" id="2.60.40.1510:FF:000017">
    <property type="entry name" value="Integrin subunit alpha 2"/>
    <property type="match status" value="1"/>
</dbReference>
<dbReference type="FunFam" id="2.60.40.1530:FF:000010">
    <property type="entry name" value="Integrin subunit alpha 2"/>
    <property type="match status" value="1"/>
</dbReference>
<dbReference type="FunFam" id="3.40.50.410:FF:000012">
    <property type="entry name" value="Integrin, alpha 10"/>
    <property type="match status" value="1"/>
</dbReference>
<dbReference type="Gene3D" id="1.20.5.930">
    <property type="entry name" value="Bicelle-embedded integrin alpha(iib) transmembrane segment"/>
    <property type="match status" value="1"/>
</dbReference>
<dbReference type="Gene3D" id="2.130.10.130">
    <property type="entry name" value="Integrin alpha, N-terminal"/>
    <property type="match status" value="1"/>
</dbReference>
<dbReference type="Gene3D" id="2.60.40.1460">
    <property type="entry name" value="Integrin domains. Chain A, domain 2"/>
    <property type="match status" value="1"/>
</dbReference>
<dbReference type="Gene3D" id="2.60.40.1510">
    <property type="entry name" value="ntegrin, alpha v. Chain A, domain 3"/>
    <property type="match status" value="1"/>
</dbReference>
<dbReference type="Gene3D" id="2.60.40.1530">
    <property type="entry name" value="ntegrin, alpha v. Chain A, domain 4"/>
    <property type="match status" value="1"/>
</dbReference>
<dbReference type="Gene3D" id="3.40.50.410">
    <property type="entry name" value="von Willebrand factor, type A domain"/>
    <property type="match status" value="1"/>
</dbReference>
<dbReference type="InterPro" id="IPR013517">
    <property type="entry name" value="FG-GAP"/>
</dbReference>
<dbReference type="InterPro" id="IPR013519">
    <property type="entry name" value="Int_alpha_beta-p"/>
</dbReference>
<dbReference type="InterPro" id="IPR000413">
    <property type="entry name" value="Integrin_alpha"/>
</dbReference>
<dbReference type="InterPro" id="IPR018184">
    <property type="entry name" value="Integrin_alpha_C_CS"/>
</dbReference>
<dbReference type="InterPro" id="IPR048285">
    <property type="entry name" value="Integrin_alpha_Ig-like_2"/>
</dbReference>
<dbReference type="InterPro" id="IPR048286">
    <property type="entry name" value="Integrin_alpha_Ig-like_3"/>
</dbReference>
<dbReference type="InterPro" id="IPR028994">
    <property type="entry name" value="Integrin_alpha_N"/>
</dbReference>
<dbReference type="InterPro" id="IPR032695">
    <property type="entry name" value="Integrin_dom_sf"/>
</dbReference>
<dbReference type="InterPro" id="IPR002035">
    <property type="entry name" value="VWF_A"/>
</dbReference>
<dbReference type="InterPro" id="IPR036465">
    <property type="entry name" value="vWFA_dom_sf"/>
</dbReference>
<dbReference type="PANTHER" id="PTHR23220">
    <property type="entry name" value="INTEGRIN ALPHA"/>
    <property type="match status" value="1"/>
</dbReference>
<dbReference type="PANTHER" id="PTHR23220:SF23">
    <property type="entry name" value="INTEGRIN ALPHA-2"/>
    <property type="match status" value="1"/>
</dbReference>
<dbReference type="Pfam" id="PF01839">
    <property type="entry name" value="FG-GAP"/>
    <property type="match status" value="2"/>
</dbReference>
<dbReference type="Pfam" id="PF20805">
    <property type="entry name" value="Integrin_A_Ig_2"/>
    <property type="match status" value="1"/>
</dbReference>
<dbReference type="Pfam" id="PF20806">
    <property type="entry name" value="Integrin_A_Ig_3"/>
    <property type="match status" value="1"/>
</dbReference>
<dbReference type="Pfam" id="PF00092">
    <property type="entry name" value="VWA"/>
    <property type="match status" value="1"/>
</dbReference>
<dbReference type="PRINTS" id="PR01185">
    <property type="entry name" value="INTEGRINA"/>
</dbReference>
<dbReference type="PRINTS" id="PR00453">
    <property type="entry name" value="VWFADOMAIN"/>
</dbReference>
<dbReference type="SMART" id="SM00191">
    <property type="entry name" value="Int_alpha"/>
    <property type="match status" value="5"/>
</dbReference>
<dbReference type="SMART" id="SM00327">
    <property type="entry name" value="VWA"/>
    <property type="match status" value="1"/>
</dbReference>
<dbReference type="SUPFAM" id="SSF69318">
    <property type="entry name" value="Integrin alpha N-terminal domain"/>
    <property type="match status" value="1"/>
</dbReference>
<dbReference type="SUPFAM" id="SSF69179">
    <property type="entry name" value="Integrin domains"/>
    <property type="match status" value="3"/>
</dbReference>
<dbReference type="SUPFAM" id="SSF53300">
    <property type="entry name" value="vWA-like"/>
    <property type="match status" value="1"/>
</dbReference>
<dbReference type="PROSITE" id="PS51470">
    <property type="entry name" value="FG_GAP"/>
    <property type="match status" value="7"/>
</dbReference>
<dbReference type="PROSITE" id="PS00242">
    <property type="entry name" value="INTEGRIN_ALPHA"/>
    <property type="match status" value="1"/>
</dbReference>
<dbReference type="PROSITE" id="PS50234">
    <property type="entry name" value="VWFA"/>
    <property type="match status" value="1"/>
</dbReference>
<gene>
    <name type="primary">ITGA2</name>
    <name type="synonym">CD49B</name>
</gene>
<organism>
    <name type="scientific">Homo sapiens</name>
    <name type="common">Human</name>
    <dbReference type="NCBI Taxonomy" id="9606"/>
    <lineage>
        <taxon>Eukaryota</taxon>
        <taxon>Metazoa</taxon>
        <taxon>Chordata</taxon>
        <taxon>Craniata</taxon>
        <taxon>Vertebrata</taxon>
        <taxon>Euteleostomi</taxon>
        <taxon>Mammalia</taxon>
        <taxon>Eutheria</taxon>
        <taxon>Euarchontoglires</taxon>
        <taxon>Primates</taxon>
        <taxon>Haplorrhini</taxon>
        <taxon>Catarrhini</taxon>
        <taxon>Hominidae</taxon>
        <taxon>Homo</taxon>
    </lineage>
</organism>
<keyword id="KW-0002">3D-structure</keyword>
<keyword id="KW-0106">Calcium</keyword>
<keyword id="KW-0130">Cell adhesion</keyword>
<keyword id="KW-0903">Direct protein sequencing</keyword>
<keyword id="KW-1015">Disulfide bond</keyword>
<keyword id="KW-0325">Glycoprotein</keyword>
<keyword id="KW-1183">Host cell receptor for virus entry</keyword>
<keyword id="KW-0945">Host-virus interaction</keyword>
<keyword id="KW-0401">Integrin</keyword>
<keyword id="KW-0460">Magnesium</keyword>
<keyword id="KW-0472">Membrane</keyword>
<keyword id="KW-0479">Metal-binding</keyword>
<keyword id="KW-1267">Proteomics identification</keyword>
<keyword id="KW-0675">Receptor</keyword>
<keyword id="KW-1185">Reference proteome</keyword>
<keyword id="KW-0677">Repeat</keyword>
<keyword id="KW-0732">Signal</keyword>
<keyword id="KW-0812">Transmembrane</keyword>
<keyword id="KW-1133">Transmembrane helix</keyword>
<name>ITA2_HUMAN</name>
<accession>P17301</accession>
<accession>Q14595</accession>
<reference key="1">
    <citation type="journal article" date="1989" name="J. Cell Biol.">
        <title>The primary structure of the VLA-2/collagen receptor alpha 2 subunit (platelet GPIa): homology to other integrins and the presence of a possible collagen-binding domain.</title>
        <authorList>
            <person name="Takada Y."/>
            <person name="Hemler M.E."/>
        </authorList>
    </citation>
    <scope>NUCLEOTIDE SEQUENCE [MRNA]</scope>
    <scope>PROTEIN SEQUENCE OF 30-44</scope>
    <scope>VARIANT LYS-534</scope>
    <source>
        <tissue>Endothelial cell</tissue>
    </source>
</reference>
<reference key="2">
    <citation type="submission" date="2002-05" db="EMBL/GenBank/DDBJ databases">
        <authorList>
            <consortium name="SeattleSNPs variation discovery resource"/>
        </authorList>
    </citation>
    <scope>NUCLEOTIDE SEQUENCE [GENOMIC DNA]</scope>
    <scope>VARIANTS LYS-691 AND GLN-1127</scope>
</reference>
<reference key="3">
    <citation type="journal article" date="2004" name="Nature">
        <title>The DNA sequence and comparative analysis of human chromosome 5.</title>
        <authorList>
            <person name="Schmutz J."/>
            <person name="Martin J."/>
            <person name="Terry A."/>
            <person name="Couronne O."/>
            <person name="Grimwood J."/>
            <person name="Lowry S."/>
            <person name="Gordon L.A."/>
            <person name="Scott D."/>
            <person name="Xie G."/>
            <person name="Huang W."/>
            <person name="Hellsten U."/>
            <person name="Tran-Gyamfi M."/>
            <person name="She X."/>
            <person name="Prabhakar S."/>
            <person name="Aerts A."/>
            <person name="Altherr M."/>
            <person name="Bajorek E."/>
            <person name="Black S."/>
            <person name="Branscomb E."/>
            <person name="Caoile C."/>
            <person name="Challacombe J.F."/>
            <person name="Chan Y.M."/>
            <person name="Denys M."/>
            <person name="Detter J.C."/>
            <person name="Escobar J."/>
            <person name="Flowers D."/>
            <person name="Fotopulos D."/>
            <person name="Glavina T."/>
            <person name="Gomez M."/>
            <person name="Gonzales E."/>
            <person name="Goodstein D."/>
            <person name="Grigoriev I."/>
            <person name="Groza M."/>
            <person name="Hammon N."/>
            <person name="Hawkins T."/>
            <person name="Haydu L."/>
            <person name="Israni S."/>
            <person name="Jett J."/>
            <person name="Kadner K."/>
            <person name="Kimball H."/>
            <person name="Kobayashi A."/>
            <person name="Lopez F."/>
            <person name="Lou Y."/>
            <person name="Martinez D."/>
            <person name="Medina C."/>
            <person name="Morgan J."/>
            <person name="Nandkeshwar R."/>
            <person name="Noonan J.P."/>
            <person name="Pitluck S."/>
            <person name="Pollard M."/>
            <person name="Predki P."/>
            <person name="Priest J."/>
            <person name="Ramirez L."/>
            <person name="Retterer J."/>
            <person name="Rodriguez A."/>
            <person name="Rogers S."/>
            <person name="Salamov A."/>
            <person name="Salazar A."/>
            <person name="Thayer N."/>
            <person name="Tice H."/>
            <person name="Tsai M."/>
            <person name="Ustaszewska A."/>
            <person name="Vo N."/>
            <person name="Wheeler J."/>
            <person name="Wu K."/>
            <person name="Yang J."/>
            <person name="Dickson M."/>
            <person name="Cheng J.-F."/>
            <person name="Eichler E.E."/>
            <person name="Olsen A."/>
            <person name="Pennacchio L.A."/>
            <person name="Rokhsar D.S."/>
            <person name="Richardson P."/>
            <person name="Lucas S.M."/>
            <person name="Myers R.M."/>
            <person name="Rubin E.M."/>
        </authorList>
    </citation>
    <scope>NUCLEOTIDE SEQUENCE [LARGE SCALE GENOMIC DNA]</scope>
</reference>
<reference key="4">
    <citation type="journal article" date="1994" name="J. Biol. Chem.">
        <title>The human alpha 2 integrin gene promoter. Identification of positive and negative regulatory elements important for cell-type and developmentally restricted gene expression.</title>
        <authorList>
            <person name="Zutter M.M."/>
            <person name="Santoro S.A."/>
            <person name="Painter A.S."/>
            <person name="Tsung Y.L."/>
            <person name="Gafford A."/>
        </authorList>
    </citation>
    <scope>NUCLEOTIDE SEQUENCE [GENOMIC DNA] OF 1-21</scope>
</reference>
<reference key="5">
    <citation type="journal article" date="1993" name="J. Virol.">
        <title>Infection by echoviruses 1 and 8 depends on the alpha 2 subunit of human VLA-2.</title>
        <authorList>
            <person name="Bergelson J.M."/>
            <person name="St John N."/>
            <person name="Kawaguchi S."/>
            <person name="Chan M."/>
            <person name="Stubdal H."/>
            <person name="Modlin J."/>
            <person name="Finberg R.W."/>
        </authorList>
    </citation>
    <scope>FUNCTION (MICROBIAL INFECTION)</scope>
    <scope>INTERACTION WITH HUMAN ECHOVIRUS 1 AND HUMAN ECHOVIRUS 8 CAPSID PROTEINS</scope>
</reference>
<reference key="6">
    <citation type="journal article" date="2003" name="J. Virol.">
        <title>Integrin-using rotaviruses bind alpha2beta1 integrin alpha2 I domain via VP4 DGE sequence and recognize alphaXbeta2 and alphaVbeta3 by using VP7 during cell entry.</title>
        <authorList>
            <person name="Graham K.L."/>
            <person name="Halasz P."/>
            <person name="Tan Y."/>
            <person name="Hewish M.J."/>
            <person name="Takada Y."/>
            <person name="Mackow E.R."/>
            <person name="Robinson M.K."/>
            <person name="Coulson B.S."/>
        </authorList>
    </citation>
    <scope>FUNCTION (MICROBIAL INFECTION)</scope>
    <scope>INTERACTION WITH ROTAVIRUS A VP4 PROTEIN</scope>
</reference>
<reference key="7">
    <citation type="journal article" date="2006" name="J. Cell Biol.">
        <title>Small GTPase Rab21 regulates cell adhesion and controls endosomal traffic of beta1-integrins.</title>
        <authorList>
            <person name="Pellinen T."/>
            <person name="Arjonen A."/>
            <person name="Vuoriluoto K."/>
            <person name="Kallio K."/>
            <person name="Fransen J.A.M."/>
            <person name="Ivaska J."/>
        </authorList>
    </citation>
    <scope>INTERACTION WITH RAB21</scope>
    <scope>MUTAGENESIS OF PHE-1159; LYS-1160; ARG-1161; LYS-1162; GLU-1164 AND LYS-1165</scope>
</reference>
<reference key="8">
    <citation type="journal article" date="2006" name="Mol. Cell. Proteomics">
        <title>Elucidation of N-glycosylation sites on human platelet proteins: a glycoproteomic approach.</title>
        <authorList>
            <person name="Lewandrowski U."/>
            <person name="Moebius J."/>
            <person name="Walter U."/>
            <person name="Sickmann A."/>
        </authorList>
    </citation>
    <scope>GLYCOSYLATION [LARGE SCALE ANALYSIS] AT ASN-343</scope>
    <source>
        <tissue>Platelet</tissue>
    </source>
</reference>
<reference key="9">
    <citation type="journal article" date="2008" name="Dev. Cell">
        <title>Integrin trafficking regulated by Rab21 is necessary for cytokinesis.</title>
        <authorList>
            <person name="Pellinen T."/>
            <person name="Tuomi S."/>
            <person name="Arjonen A."/>
            <person name="Wolf M."/>
            <person name="Edgren H."/>
            <person name="Meyer H."/>
            <person name="Grosse R."/>
            <person name="Kitzing T."/>
            <person name="Rantala J.K."/>
            <person name="Kallioniemi O."/>
            <person name="Faessler R."/>
            <person name="Kallio M."/>
            <person name="Ivaska J."/>
        </authorList>
    </citation>
    <scope>MUTAGENESIS OF LYS-1160; ARG-1161 AND LYS-1162</scope>
</reference>
<reference key="10">
    <citation type="journal article" date="2008" name="J. Proteome Res.">
        <title>Phosphoproteome of resting human platelets.</title>
        <authorList>
            <person name="Zahedi R.P."/>
            <person name="Lewandrowski U."/>
            <person name="Wiesner J."/>
            <person name="Wortelkamp S."/>
            <person name="Moebius J."/>
            <person name="Schuetz C."/>
            <person name="Walter U."/>
            <person name="Gambaryan S."/>
            <person name="Sickmann A."/>
        </authorList>
    </citation>
    <scope>IDENTIFICATION BY MASS SPECTROMETRY [LARGE SCALE ANALYSIS]</scope>
    <source>
        <tissue>Platelet</tissue>
    </source>
</reference>
<reference key="11">
    <citation type="journal article" date="2008" name="Proc. Natl. Acad. Sci. U.S.A.">
        <title>A quantitative atlas of mitotic phosphorylation.</title>
        <authorList>
            <person name="Dephoure N."/>
            <person name="Zhou C."/>
            <person name="Villen J."/>
            <person name="Beausoleil S.A."/>
            <person name="Bakalarski C.E."/>
            <person name="Elledge S.J."/>
            <person name="Gygi S.P."/>
        </authorList>
    </citation>
    <scope>IDENTIFICATION BY MASS SPECTROMETRY [LARGE SCALE ANALYSIS]</scope>
    <source>
        <tissue>Cervix carcinoma</tissue>
    </source>
</reference>
<reference key="12">
    <citation type="journal article" date="2009" name="J. Proteome Res.">
        <title>Glycoproteomics analysis of human liver tissue by combination of multiple enzyme digestion and hydrazide chemistry.</title>
        <authorList>
            <person name="Chen R."/>
            <person name="Jiang X."/>
            <person name="Sun D."/>
            <person name="Han G."/>
            <person name="Wang F."/>
            <person name="Ye M."/>
            <person name="Wang L."/>
            <person name="Zou H."/>
        </authorList>
    </citation>
    <scope>GLYCOSYLATION [LARGE SCALE ANALYSIS] AT ASN-343</scope>
    <source>
        <tissue>Liver</tissue>
    </source>
</reference>
<reference key="13">
    <citation type="journal article" date="2009" name="Nat. Biotechnol.">
        <title>Mass-spectrometric identification and relative quantification of N-linked cell surface glycoproteins.</title>
        <authorList>
            <person name="Wollscheid B."/>
            <person name="Bausch-Fluck D."/>
            <person name="Henderson C."/>
            <person name="O'Brien R."/>
            <person name="Bibel M."/>
            <person name="Schiess R."/>
            <person name="Aebersold R."/>
            <person name="Watts J.D."/>
        </authorList>
    </citation>
    <scope>GLYCOSYLATION [LARGE SCALE ANALYSIS] AT ASN-343</scope>
    <source>
        <tissue>Leukemic T-cell</tissue>
    </source>
</reference>
<reference key="14">
    <citation type="journal article" date="2011" name="BMC Syst. Biol.">
        <title>Initial characterization of the human central proteome.</title>
        <authorList>
            <person name="Burkard T.R."/>
            <person name="Planyavsky M."/>
            <person name="Kaupe I."/>
            <person name="Breitwieser F.P."/>
            <person name="Buerckstuemmer T."/>
            <person name="Bennett K.L."/>
            <person name="Superti-Furga G."/>
            <person name="Colinge J."/>
        </authorList>
    </citation>
    <scope>IDENTIFICATION BY MASS SPECTROMETRY [LARGE SCALE ANALYSIS]</scope>
</reference>
<reference key="15">
    <citation type="journal article" date="1997" name="J. Biol. Chem.">
        <title>Crystal structure of the I domain from integrin alpha2beta1.</title>
        <authorList>
            <person name="Emsley J."/>
            <person name="King S.L."/>
            <person name="Bergelson J.M."/>
            <person name="Liddington R.C."/>
        </authorList>
    </citation>
    <scope>X-RAY CRYSTALLOGRAPHY (2.1 ANGSTROMS) OF 168-368</scope>
</reference>
<reference key="16">
    <citation type="journal article" date="1993" name="J. Clin. Invest.">
        <title>The human platelet alloantigens Br(a) and Brb are associated with a single amino acid polymorphism on glycoprotein Ia (integrin subunit alpha 2).</title>
        <authorList>
            <person name="Santoso S."/>
            <person name="Kalb R."/>
            <person name="Walka M."/>
            <person name="Kiefel V."/>
            <person name="Mueller-Eckhardt C."/>
            <person name="Newman P.J."/>
        </authorList>
    </citation>
    <scope>VARIANT LYS-534</scope>
    <scope>POLYMORPHISM</scope>
</reference>
<reference key="17">
    <citation type="journal article" date="2000" name="Thromb. Haemost.">
        <title>The impact of the glycoprotein Ia collagen receptor subunit A1648G gene polymorphism on coronary artery disease and acute myocardial infarction.</title>
        <authorList>
            <person name="Kroll H."/>
            <person name="Gardemann A."/>
            <person name="Fechter A."/>
            <person name="Haberbosch W."/>
            <person name="Santoso S."/>
        </authorList>
    </citation>
    <scope>VARIANT LYS-534</scope>
    <scope>POLYMORPHISM</scope>
</reference>
<reference key="18">
    <citation type="journal article" date="2013" name="Vox Sang.">
        <title>HPA-5 typing discrepancy reveals an Ile503Leu substitution in platelet GPIa (alpha2 integrin).</title>
        <authorList>
            <person name="Bertrand G."/>
            <person name="Jallu V."/>
            <person name="Beranger T."/>
            <person name="Bianchi F."/>
            <person name="Casale C."/>
            <person name="Dufour V."/>
            <person name="Chenet C."/>
            <person name="Quesne J."/>
            <person name="Martageix C."/>
            <person name="Kaplan C."/>
        </authorList>
    </citation>
    <scope>VARIANT LEU-532</scope>
</reference>
<proteinExistence type="evidence at protein level"/>
<comment type="function">
    <text>Integrin alpha-2/beta-1 is a receptor for laminin, collagen, collagen C-propeptides, fibronectin and E-cadherin. It recognizes the proline-hydroxylated sequence G-F-P-G-E-R in collagen. It is responsible for adhesion of platelets and other cells to collagens, modulation of collagen and collagenase gene expression, force generation and organization of newly synthesized extracellular matrix.</text>
</comment>
<comment type="function">
    <text evidence="7">(Microbial infection) Integrin ITGA2:ITGB1 acts as a receptor for Human rotavirus A.</text>
</comment>
<comment type="function">
    <text evidence="16">(Microbial infection) Integrin ITGA2:ITGB1 acts as a receptor for Human echoviruses 1 and 8.</text>
</comment>
<comment type="subunit">
    <text evidence="9">Heterodimer of an alpha and a beta subunit. Alpha-2 associates with beta-1. Interacts with HPS5 and RAB21.</text>
</comment>
<comment type="subunit">
    <text evidence="7">(Microbial infection) Integrin ITGA2:ITGB1 interacts (via ITAG2 I-domain) with rotavirus A VP4 protein.</text>
</comment>
<comment type="subunit">
    <text evidence="16">(Microbial infection) Integrin ITGA2:ITGB1 interacts with human echoviruses 1 and 8 capsid proteins.</text>
</comment>
<comment type="interaction">
    <interactant intactId="EBI-702960">
        <id>P17301</id>
    </interactant>
    <interactant intactId="EBI-703066">
        <id>P05556</id>
        <label>ITGB1</label>
    </interactant>
    <organismsDiffer>false</organismsDiffer>
    <experiments>5</experiments>
</comment>
<comment type="interaction">
    <interactant intactId="EBI-702960">
        <id>P17301</id>
    </interactant>
    <interactant intactId="EBI-1005487">
        <id>P35968</id>
        <label>KDR</label>
    </interactant>
    <organismsDiffer>false</organismsDiffer>
    <experiments>2</experiments>
</comment>
<comment type="interaction">
    <interactant intactId="EBI-702960">
        <id>P17301</id>
    </interactant>
    <interactant intactId="EBI-3942966">
        <id>Q9H0F6</id>
        <label>SHARPIN</label>
    </interactant>
    <organismsDiffer>false</organismsDiffer>
    <experiments>5</experiments>
</comment>
<comment type="interaction">
    <interactant intactId="EBI-702960">
        <id>P17301</id>
    </interactant>
    <interactant intactId="EBI-297693">
        <id>P84092</id>
        <label>Ap2m1</label>
    </interactant>
    <organismsDiffer>true</organismsDiffer>
    <experiments>2</experiments>
</comment>
<comment type="interaction">
    <interactant intactId="EBI-702960">
        <id>P17301</id>
    </interactant>
    <interactant intactId="EBI-1993555">
        <id>P35282</id>
        <label>Rab21</label>
    </interactant>
    <organismsDiffer>true</organismsDiffer>
    <experiments>7</experiments>
</comment>
<comment type="interaction">
    <interactant intactId="EBI-702960">
        <id>P17301</id>
    </interactant>
    <interactant intactId="EBI-15711650">
        <id>P04512</id>
    </interactant>
    <organismsDiffer>true</organismsDiffer>
    <experiments>3</experiments>
</comment>
<comment type="subcellular location">
    <subcellularLocation>
        <location>Membrane</location>
        <topology>Single-pass type I membrane protein</topology>
    </subcellularLocation>
</comment>
<comment type="domain">
    <text>The integrin I-domain (insert) is a VWFA domain. Integrins with I-domains do not undergo protease cleavage.</text>
</comment>
<comment type="polymorphism">
    <text evidence="6 15">Position 534 is associated with platelet-specific alloantigen HPA-5 (Br). HPA-5B/Br(a) has Lys-534 and HPA-5A/Br(b) has Glu-534. HPA-5B is involved in neonatal alloimmune thrombocytopenia (NAIT or NATP). The Lys-534-Glu polymorphism may play a role in coronary artery disease (CAD).</text>
</comment>
<comment type="similarity">
    <text evidence="18">Belongs to the integrin alpha chain family.</text>
</comment>
<evidence type="ECO:0000250" key="1"/>
<evidence type="ECO:0000250" key="2">
    <source>
        <dbReference type="UniProtKB" id="P08648"/>
    </source>
</evidence>
<evidence type="ECO:0000255" key="3"/>
<evidence type="ECO:0000255" key="4">
    <source>
        <dbReference type="PROSITE-ProRule" id="PRU00219"/>
    </source>
</evidence>
<evidence type="ECO:0000255" key="5">
    <source>
        <dbReference type="PROSITE-ProRule" id="PRU00803"/>
    </source>
</evidence>
<evidence type="ECO:0000269" key="6">
    <source>
    </source>
</evidence>
<evidence type="ECO:0000269" key="7">
    <source>
    </source>
</evidence>
<evidence type="ECO:0000269" key="8">
    <source>
    </source>
</evidence>
<evidence type="ECO:0000269" key="9">
    <source>
    </source>
</evidence>
<evidence type="ECO:0000269" key="10">
    <source>
    </source>
</evidence>
<evidence type="ECO:0000269" key="11">
    <source>
    </source>
</evidence>
<evidence type="ECO:0000269" key="12">
    <source>
    </source>
</evidence>
<evidence type="ECO:0000269" key="13">
    <source>
    </source>
</evidence>
<evidence type="ECO:0000269" key="14">
    <source>
    </source>
</evidence>
<evidence type="ECO:0000269" key="15">
    <source>
    </source>
</evidence>
<evidence type="ECO:0000269" key="16">
    <source>
    </source>
</evidence>
<evidence type="ECO:0000269" key="17">
    <source ref="2"/>
</evidence>
<evidence type="ECO:0000305" key="18"/>
<evidence type="ECO:0007829" key="19">
    <source>
        <dbReference type="PDB" id="1V7P"/>
    </source>
</evidence>
<sequence>MGPERTGAAPLPLLLVLALSQGILNCCLAYNVGLPEAKIFSGPSSEQFGYAVQQFINPKGNWLLVGSPWSGFPENRMGDVYKCPVDLSTATCEKLNLQTSTSIPNVTEMKTNMSLGLILTRNMGTGGFLTCGPLWAQQCGNQYYTTGVCSDISPDFQLSASFSPATQPCPSLIDVVVVCDESNSIYPWDAVKNFLEKFVQGLDIGPTKTQVGLIQYANNPRVVFNLNTYKTKEEMIVATSQTSQYGGDLTNTFGAIQYARKYAYSAASGGRRSATKVMVVVTDGESHDGSMLKAVIDQCNHDNILRFGIAVLGYLNRNALDTKNLIKEIKAIASIPTERYFFNVSDEAALLEKAGTLGEQIFSIEGTVQGGDNFQMEMSQVGFSADYSSQNDILMLGAVGAFGWSGTIVQKTSHGHLIFPKQAFDQILQDRNHSSYLGYSVAAISTGESTHFVAGAPRANYTGQIVLYSVNENGNITVIQAHRGDQIGSYFGSVLCSVDVDKDTITDVLLVGAPMYMSDLKKEEGRVYLFTIKEGILGQHQFLEGPEGIENTRFGSAIAALSDINMDGFNDVIVGSPLENQNSGAVYIYNGHQGTIRTKYSQKILGSDGAFRSHLQYFGRSLDGYGDLNGDSITDVSIGAFGQVVQLWSQSIADVAIEASFTPEKITLVNKNAQIILKLCFSAKFRPTKQNNQVAIVYNITLDADGFSSRVTSRGLFKENNERCLQKNMVVNQAQSCPEHIIYIQEPSDVVNSLDLRVDISLENPGTSPALEAYSETAKVFSIPFHKDCGEDGLCISDLVLDVRQIPAAQEQPFIVSNQNKRLTFSVTLKNKRESAYNTGIVVDFSENLFFASFSLPVDGTEVTCQVAASQKSVACDVGYPALKREQQVTFTINFDFNLQNLQNQASLSFQALSESQEENKADNLVNLKIPLLYDAEIHLTRSTNINFYEISSDGNVPSIVHSFEDVGPKFIFSLKVTTGSVPVSMATVIIHIPQYTKEKNPLMYLTGVQTDKAGDISCNADINPLKIGQTSSSVSFKSENFRHTKELNCRTASCSNVTCWLKDVHMKGEYFVNVTTRIWNGTFASSTFQTVQLTAAAEINTYNPEIYVIEDNTVTIPLMIMKPDEKAEVPTGVIIGSIIAGILLLLALVAILWKLGFFKRKYEKMTKNPDEIDETTELSS</sequence>
<feature type="signal peptide" evidence="14">
    <location>
        <begin position="1"/>
        <end position="29"/>
    </location>
</feature>
<feature type="chain" id="PRO_0000016233" description="Integrin alpha-2">
    <location>
        <begin position="30"/>
        <end position="1181"/>
    </location>
</feature>
<feature type="topological domain" description="Extracellular" evidence="3">
    <location>
        <begin position="30"/>
        <end position="1132"/>
    </location>
</feature>
<feature type="transmembrane region" description="Helical" evidence="3">
    <location>
        <begin position="1133"/>
        <end position="1154"/>
    </location>
</feature>
<feature type="topological domain" description="Cytoplasmic" evidence="3">
    <location>
        <begin position="1155"/>
        <end position="1181"/>
    </location>
</feature>
<feature type="repeat" description="FG-GAP 1" evidence="5">
    <location>
        <begin position="34"/>
        <end position="92"/>
    </location>
</feature>
<feature type="repeat" description="FG-GAP 2" evidence="5">
    <location>
        <begin position="101"/>
        <end position="161"/>
    </location>
</feature>
<feature type="domain" description="VWFA" evidence="4">
    <location>
        <begin position="188"/>
        <end position="365"/>
    </location>
</feature>
<feature type="repeat" description="FG-GAP 3" evidence="5">
    <location>
        <begin position="366"/>
        <end position="420"/>
    </location>
</feature>
<feature type="repeat" description="FG-GAP 4" evidence="5">
    <location>
        <begin position="423"/>
        <end position="475"/>
    </location>
</feature>
<feature type="repeat" description="FG-GAP 5" evidence="5">
    <location>
        <begin position="477"/>
        <end position="539"/>
    </location>
</feature>
<feature type="repeat" description="FG-GAP 6" evidence="5">
    <location>
        <begin position="540"/>
        <end position="598"/>
    </location>
</feature>
<feature type="repeat" description="FG-GAP 7" evidence="5">
    <location>
        <begin position="602"/>
        <end position="664"/>
    </location>
</feature>
<feature type="region of interest" description="Interaction with HPS5">
    <location>
        <begin position="1155"/>
        <end position="1161"/>
    </location>
</feature>
<feature type="short sequence motif" description="GFFKR motif">
    <location>
        <begin position="1157"/>
        <end position="1161"/>
    </location>
</feature>
<feature type="binding site" evidence="2">
    <location>
        <position position="499"/>
    </location>
    <ligand>
        <name>Ca(2+)</name>
        <dbReference type="ChEBI" id="CHEBI:29108"/>
        <label>1</label>
    </ligand>
</feature>
<feature type="binding site" evidence="2">
    <location>
        <position position="501"/>
    </location>
    <ligand>
        <name>Ca(2+)</name>
        <dbReference type="ChEBI" id="CHEBI:29108"/>
        <label>1</label>
    </ligand>
</feature>
<feature type="binding site" evidence="2">
    <location>
        <position position="503"/>
    </location>
    <ligand>
        <name>Ca(2+)</name>
        <dbReference type="ChEBI" id="CHEBI:29108"/>
        <label>1</label>
    </ligand>
</feature>
<feature type="binding site" evidence="2">
    <location>
        <position position="507"/>
    </location>
    <ligand>
        <name>Ca(2+)</name>
        <dbReference type="ChEBI" id="CHEBI:29108"/>
        <label>1</label>
    </ligand>
</feature>
<feature type="binding site" evidence="2">
    <location>
        <position position="563"/>
    </location>
    <ligand>
        <name>Ca(2+)</name>
        <dbReference type="ChEBI" id="CHEBI:29108"/>
        <label>2</label>
    </ligand>
</feature>
<feature type="binding site" evidence="2">
    <location>
        <position position="565"/>
    </location>
    <ligand>
        <name>Ca(2+)</name>
        <dbReference type="ChEBI" id="CHEBI:29108"/>
        <label>2</label>
    </ligand>
</feature>
<feature type="binding site" evidence="2">
    <location>
        <position position="567"/>
    </location>
    <ligand>
        <name>Ca(2+)</name>
        <dbReference type="ChEBI" id="CHEBI:29108"/>
        <label>2</label>
    </ligand>
</feature>
<feature type="binding site" evidence="2">
    <location>
        <position position="571"/>
    </location>
    <ligand>
        <name>Ca(2+)</name>
        <dbReference type="ChEBI" id="CHEBI:29108"/>
        <label>2</label>
    </ligand>
</feature>
<feature type="binding site" evidence="2">
    <location>
        <position position="627"/>
    </location>
    <ligand>
        <name>Ca(2+)</name>
        <dbReference type="ChEBI" id="CHEBI:29108"/>
        <label>3</label>
    </ligand>
</feature>
<feature type="binding site" evidence="2">
    <location>
        <position position="629"/>
    </location>
    <ligand>
        <name>Ca(2+)</name>
        <dbReference type="ChEBI" id="CHEBI:29108"/>
        <label>3</label>
    </ligand>
</feature>
<feature type="binding site" evidence="2">
    <location>
        <position position="631"/>
    </location>
    <ligand>
        <name>Ca(2+)</name>
        <dbReference type="ChEBI" id="CHEBI:29108"/>
        <label>3</label>
    </ligand>
</feature>
<feature type="binding site" evidence="2">
    <location>
        <position position="635"/>
    </location>
    <ligand>
        <name>Ca(2+)</name>
        <dbReference type="ChEBI" id="CHEBI:29108"/>
        <label>3</label>
    </ligand>
</feature>
<feature type="glycosylation site" description="N-linked (GlcNAc...) asparagine" evidence="3">
    <location>
        <position position="105"/>
    </location>
</feature>
<feature type="glycosylation site" description="N-linked (GlcNAc...) asparagine" evidence="3">
    <location>
        <position position="112"/>
    </location>
</feature>
<feature type="glycosylation site" description="N-linked (GlcNAc...) asparagine" evidence="8 11 12">
    <location>
        <position position="343"/>
    </location>
</feature>
<feature type="glycosylation site" description="N-linked (GlcNAc...) asparagine" evidence="3">
    <location>
        <position position="432"/>
    </location>
</feature>
<feature type="glycosylation site" description="N-linked (GlcNAc...) asparagine" evidence="3">
    <location>
        <position position="460"/>
    </location>
</feature>
<feature type="glycosylation site" description="N-linked (GlcNAc...) asparagine" evidence="3">
    <location>
        <position position="475"/>
    </location>
</feature>
<feature type="glycosylation site" description="N-linked (GlcNAc...) asparagine" evidence="3">
    <location>
        <position position="699"/>
    </location>
</feature>
<feature type="glycosylation site" description="N-linked (GlcNAc...) asparagine" evidence="3">
    <location>
        <position position="1057"/>
    </location>
</feature>
<feature type="glycosylation site" description="N-linked (GlcNAc...) asparagine" evidence="3">
    <location>
        <position position="1074"/>
    </location>
</feature>
<feature type="glycosylation site" description="N-linked (GlcNAc...) asparagine" evidence="3">
    <location>
        <position position="1081"/>
    </location>
</feature>
<feature type="disulfide bond" evidence="1">
    <location>
        <begin position="83"/>
        <end position="92"/>
    </location>
</feature>
<feature type="disulfide bond" evidence="1">
    <location>
        <begin position="680"/>
        <end position="737"/>
    </location>
</feature>
<feature type="disulfide bond" evidence="1">
    <location>
        <begin position="789"/>
        <end position="795"/>
    </location>
</feature>
<feature type="disulfide bond" evidence="1">
    <location>
        <begin position="865"/>
        <end position="876"/>
    </location>
</feature>
<feature type="disulfide bond" evidence="1">
    <location>
        <begin position="1019"/>
        <end position="1050"/>
    </location>
</feature>
<feature type="disulfide bond" evidence="1">
    <location>
        <begin position="1055"/>
        <end position="1060"/>
    </location>
</feature>
<feature type="sequence variant" id="VAR_076939" description="In dbSNP:rs199808499." evidence="13">
    <original>I</original>
    <variation>L</variation>
    <location>
        <position position="532"/>
    </location>
</feature>
<feature type="sequence variant" id="VAR_003977" description="In alloantigen HPA-5B; dbSNP:rs1801106." evidence="6 14 15">
    <original>E</original>
    <variation>K</variation>
    <location>
        <position position="534"/>
    </location>
</feature>
<feature type="sequence variant" id="VAR_029146" description="In dbSNP:rs3212557." evidence="17">
    <original>N</original>
    <variation>K</variation>
    <location>
        <position position="691"/>
    </location>
</feature>
<feature type="sequence variant" id="VAR_021855" description="In dbSNP:rs2287870.">
    <original>N</original>
    <variation>S</variation>
    <location>
        <position position="927"/>
    </location>
</feature>
<feature type="sequence variant" id="VAR_020036" description="In dbSNP:rs3212645." evidence="17">
    <original>K</original>
    <variation>Q</variation>
    <location>
        <position position="1127"/>
    </location>
</feature>
<feature type="mutagenesis site" description="No significant reduction of RAB21-binding by co-immunoprecipitation assay; when associated with A-1160 and A-1162." evidence="9">
    <original>F</original>
    <variation>A</variation>
    <location>
        <position position="1159"/>
    </location>
</feature>
<feature type="mutagenesis site" description="No effect on RAB21-binding. Significant reduction of RAB21-binding; when associated with A-1161. Shows defective cytokinesis on collagen, but not on fibronectin; when associated with A-1161." evidence="9 10">
    <original>K</original>
    <variation>A</variation>
    <location>
        <position position="1160"/>
    </location>
</feature>
<feature type="mutagenesis site" description="Significant reduction of RAB21-binding; when associated with A-1160. Shows defective cytokinesis on collagen, but not on fibronectin; when associated with A-1160." evidence="9 10">
    <original>R</original>
    <variation>A</variation>
    <location>
        <position position="1161"/>
    </location>
</feature>
<feature type="mutagenesis site" description="No significant reduction of RAB21-binding by co-immunoprecipitation assay; when associated with A-1159 and A-1160." evidence="9 10">
    <original>K</original>
    <variation>A</variation>
    <location>
        <position position="1162"/>
    </location>
</feature>
<feature type="mutagenesis site" description="Markedly weakens RAB21-binding. Shows defective cytokinesis on collagen, but not on fibronectin." evidence="9 10">
    <original>K</original>
    <variation>P</variation>
    <location>
        <position position="1162"/>
    </location>
</feature>
<feature type="mutagenesis site" description="Significant reduction of RAB21-binding; when associated with A-1160; A-1161 and A-1165." evidence="9">
    <original>E</original>
    <variation>A</variation>
    <location>
        <position position="1164"/>
    </location>
</feature>
<feature type="mutagenesis site" description="Significant reduction of RAB21-binding; when associated with A-1160; A-1161 and A-1164." evidence="9">
    <original>K</original>
    <variation>A</variation>
    <location>
        <position position="1165"/>
    </location>
</feature>
<feature type="sequence conflict" description="In Ref. 3; AAA16619." evidence="18" ref="3">
    <original>L</original>
    <variation>V</variation>
    <location>
        <position position="17"/>
    </location>
</feature>
<feature type="strand" evidence="19">
    <location>
        <begin position="173"/>
        <end position="180"/>
    </location>
</feature>
<feature type="helix" evidence="19">
    <location>
        <begin position="188"/>
        <end position="200"/>
    </location>
</feature>
<feature type="strand" evidence="19">
    <location>
        <begin position="208"/>
        <end position="224"/>
    </location>
</feature>
<feature type="turn" evidence="19">
    <location>
        <begin position="226"/>
        <end position="228"/>
    </location>
</feature>
<feature type="helix" evidence="19">
    <location>
        <begin position="232"/>
        <end position="241"/>
    </location>
</feature>
<feature type="helix" evidence="19">
    <location>
        <begin position="252"/>
        <end position="262"/>
    </location>
</feature>
<feature type="helix" evidence="19">
    <location>
        <begin position="266"/>
        <end position="268"/>
    </location>
</feature>
<feature type="strand" evidence="19">
    <location>
        <begin position="274"/>
        <end position="284"/>
    </location>
</feature>
<feature type="helix" evidence="19">
    <location>
        <begin position="289"/>
        <end position="291"/>
    </location>
</feature>
<feature type="helix" evidence="19">
    <location>
        <begin position="292"/>
        <end position="301"/>
    </location>
</feature>
<feature type="strand" evidence="19">
    <location>
        <begin position="304"/>
        <end position="311"/>
    </location>
</feature>
<feature type="helix" evidence="19">
    <location>
        <begin position="313"/>
        <end position="317"/>
    </location>
</feature>
<feature type="helix" evidence="19">
    <location>
        <begin position="323"/>
        <end position="332"/>
    </location>
</feature>
<feature type="helix" evidence="19">
    <location>
        <begin position="337"/>
        <end position="340"/>
    </location>
</feature>
<feature type="strand" evidence="19">
    <location>
        <begin position="341"/>
        <end position="347"/>
    </location>
</feature>
<feature type="helix" evidence="19">
    <location>
        <begin position="348"/>
        <end position="353"/>
    </location>
</feature>
<feature type="helix" evidence="19">
    <location>
        <begin position="354"/>
        <end position="362"/>
    </location>
</feature>